<feature type="chain" id="PRO_0000085990" description="Serine/threonine-protein kinase haspin">
    <location>
        <begin position="1"/>
        <end position="754"/>
    </location>
</feature>
<feature type="domain" description="Protein kinase" evidence="4 9">
    <location>
        <begin position="440"/>
        <end position="754"/>
    </location>
</feature>
<feature type="region of interest" description="Disordered" evidence="5">
    <location>
        <begin position="1"/>
        <end position="113"/>
    </location>
</feature>
<feature type="region of interest" description="Disordered" evidence="5">
    <location>
        <begin position="245"/>
        <end position="327"/>
    </location>
</feature>
<feature type="compositionally biased region" description="Polar residues" evidence="5">
    <location>
        <begin position="45"/>
        <end position="55"/>
    </location>
</feature>
<feature type="compositionally biased region" description="Basic and acidic residues" evidence="5">
    <location>
        <begin position="272"/>
        <end position="287"/>
    </location>
</feature>
<feature type="compositionally biased region" description="Basic residues" evidence="5">
    <location>
        <begin position="294"/>
        <end position="304"/>
    </location>
</feature>
<feature type="compositionally biased region" description="Basic residues" evidence="5">
    <location>
        <begin position="314"/>
        <end position="325"/>
    </location>
</feature>
<feature type="active site" description="Proton acceptor" evidence="4">
    <location>
        <position position="127"/>
    </location>
</feature>
<feature type="active site" description="Proton acceptor" evidence="4">
    <location>
        <position position="605"/>
    </location>
</feature>
<feature type="binding site" evidence="2 4">
    <location>
        <begin position="446"/>
        <end position="454"/>
    </location>
    <ligand>
        <name>ATP</name>
        <dbReference type="ChEBI" id="CHEBI:30616"/>
    </ligand>
</feature>
<feature type="binding site" evidence="2 4">
    <location>
        <position position="467"/>
    </location>
    <ligand>
        <name>ATP</name>
        <dbReference type="ChEBI" id="CHEBI:30616"/>
    </ligand>
</feature>
<feature type="binding site" evidence="4">
    <location>
        <begin position="562"/>
        <end position="567"/>
    </location>
    <ligand>
        <name>ATP</name>
        <dbReference type="ChEBI" id="CHEBI:30616"/>
    </ligand>
</feature>
<feature type="binding site" evidence="4">
    <location>
        <begin position="605"/>
        <end position="610"/>
    </location>
    <ligand>
        <name>ATP</name>
        <dbReference type="ChEBI" id="CHEBI:30616"/>
    </ligand>
</feature>
<feature type="binding site" evidence="4">
    <location>
        <begin position="643"/>
        <end position="645"/>
    </location>
    <ligand>
        <name>ATP</name>
        <dbReference type="ChEBI" id="CHEBI:30616"/>
    </ligand>
</feature>
<feature type="modified residue" description="Phosphoserine" evidence="3">
    <location>
        <position position="55"/>
    </location>
</feature>
<feature type="modified residue" description="Phosphothreonine" evidence="13">
    <location>
        <position position="379"/>
    </location>
</feature>
<feature type="sequence conflict" description="In Ref. 1; BAA75494 and 5; CAI24789." evidence="9" ref="1 5">
    <original>P</original>
    <variation>L</variation>
    <location>
        <position position="104"/>
    </location>
</feature>
<feature type="sequence conflict" description="In Ref. 2; BAB00640 and 4; AAK30301." evidence="9" ref="2 4">
    <original>Q</original>
    <variation>R</variation>
    <location>
        <position position="305"/>
    </location>
</feature>
<proteinExistence type="evidence at protein level"/>
<gene>
    <name type="primary">Haspin</name>
    <name type="synonym">Gsg2</name>
</gene>
<reference evidence="9" key="1">
    <citation type="journal article" date="1994" name="FEBS Lett.">
        <title>Isolation and characterization of cDNA clones specifically expressed in testicular germ cells.</title>
        <authorList>
            <person name="Tanaka H."/>
            <person name="Yoshimura Y."/>
            <person name="Nishina Y."/>
            <person name="Nozaki M."/>
            <person name="Nojima H."/>
            <person name="Nishimune Y."/>
        </authorList>
    </citation>
    <scope>NUCLEOTIDE SEQUENCE [MRNA]</scope>
    <scope>TISSUE SPECIFICITY</scope>
    <source>
        <strain evidence="8">C57BL/6J</strain>
        <tissue evidence="11">Testis</tissue>
    </source>
</reference>
<reference evidence="9" key="2">
    <citation type="journal article" date="1999" name="J. Biol. Chem.">
        <title>Identification and characterization of a haploid germ cell-specific nuclear protein kinase (Haspin) in spermatid nuclei and its effects on somatic cells.</title>
        <authorList>
            <person name="Tanaka H."/>
            <person name="Yoshimura Y."/>
            <person name="Nozaki M."/>
            <person name="Yomogida K."/>
            <person name="Tsuchida J."/>
            <person name="Tosaka Y."/>
            <person name="Habu T."/>
            <person name="Nakanishi T."/>
            <person name="Okada M."/>
            <person name="Nojima H."/>
            <person name="Nishimune Y."/>
        </authorList>
    </citation>
    <scope>NUCLEOTIDE SEQUENCE [GENOMIC DNA]</scope>
    <scope>FUNCTION</scope>
    <scope>PHOSPHORYLATION</scope>
    <scope>TISSUE SPECIFICITY</scope>
    <scope>SUBCELLULAR LOCATION</scope>
    <source>
        <strain evidence="6">C57BL/6J</strain>
        <tissue evidence="11">Testis</tissue>
    </source>
</reference>
<reference evidence="12" key="3">
    <citation type="journal article" date="2001" name="Gene">
        <title>Nested genomic structure of haploid germ cell specific haspin gene.</title>
        <authorList>
            <person name="Yoshimura Y."/>
            <person name="Tanaka H."/>
            <person name="Nozaki M."/>
            <person name="Yomogida K."/>
            <person name="Yasunaga T."/>
            <person name="Nishimune Y."/>
        </authorList>
    </citation>
    <scope>NUCLEOTIDE SEQUENCE [GENOMIC DNA]</scope>
</reference>
<reference evidence="9" key="4">
    <citation type="journal article" date="2001" name="Gene">
        <title>The Haspin gene: location in an intron of the Integrin Alpha-E gene, associated transcription of an Integrin alpha-E-derived RNA and expression in diploid as well as haploid cells.</title>
        <authorList>
            <person name="Higgins J.M.G."/>
        </authorList>
    </citation>
    <scope>NUCLEOTIDE SEQUENCE [GENOMIC DNA]</scope>
    <scope>TISSUE SPECIFICITY</scope>
    <source>
        <strain evidence="10">129/Sv</strain>
    </source>
</reference>
<reference key="5">
    <citation type="journal article" date="2009" name="PLoS Biol.">
        <title>Lineage-specific biology revealed by a finished genome assembly of the mouse.</title>
        <authorList>
            <person name="Church D.M."/>
            <person name="Goodstadt L."/>
            <person name="Hillier L.W."/>
            <person name="Zody M.C."/>
            <person name="Goldstein S."/>
            <person name="She X."/>
            <person name="Bult C.J."/>
            <person name="Agarwala R."/>
            <person name="Cherry J.L."/>
            <person name="DiCuccio M."/>
            <person name="Hlavina W."/>
            <person name="Kapustin Y."/>
            <person name="Meric P."/>
            <person name="Maglott D."/>
            <person name="Birtle Z."/>
            <person name="Marques A.C."/>
            <person name="Graves T."/>
            <person name="Zhou S."/>
            <person name="Teague B."/>
            <person name="Potamousis K."/>
            <person name="Churas C."/>
            <person name="Place M."/>
            <person name="Herschleb J."/>
            <person name="Runnheim R."/>
            <person name="Forrest D."/>
            <person name="Amos-Landgraf J."/>
            <person name="Schwartz D.C."/>
            <person name="Cheng Z."/>
            <person name="Lindblad-Toh K."/>
            <person name="Eichler E.E."/>
            <person name="Ponting C.P."/>
        </authorList>
    </citation>
    <scope>NUCLEOTIDE SEQUENCE [LARGE SCALE GENOMIC DNA]</scope>
    <source>
        <strain>C57BL/6J</strain>
    </source>
</reference>
<reference key="6">
    <citation type="journal article" date="2005" name="Genes Dev.">
        <title>The kinase haspin is required for mitotic histone H3 Thr 3 phosphorylation and normal metaphase chromosome alignment.</title>
        <authorList>
            <person name="Dai J."/>
            <person name="Sultan S."/>
            <person name="Taylor S.S."/>
            <person name="Higgins J.M.G."/>
        </authorList>
    </citation>
    <scope>FUNCTION</scope>
</reference>
<reference key="7">
    <citation type="journal article" date="2010" name="Cell">
        <title>A tissue-specific atlas of mouse protein phosphorylation and expression.</title>
        <authorList>
            <person name="Huttlin E.L."/>
            <person name="Jedrychowski M.P."/>
            <person name="Elias J.E."/>
            <person name="Goswami T."/>
            <person name="Rad R."/>
            <person name="Beausoleil S.A."/>
            <person name="Villen J."/>
            <person name="Haas W."/>
            <person name="Sowa M.E."/>
            <person name="Gygi S.P."/>
        </authorList>
    </citation>
    <scope>PHOSPHORYLATION [LARGE SCALE ANALYSIS] AT THR-379</scope>
    <scope>IDENTIFICATION BY MASS SPECTROMETRY [LARGE SCALE ANALYSIS]</scope>
    <source>
        <tissue>Spleen</tissue>
    </source>
</reference>
<name>HASP_MOUSE</name>
<comment type="function">
    <text evidence="3">Serine/threonine-protein kinase that phosphorylates histone H3 at 'Thr-3' (H3T3ph) during mitosis. May act through H3T3ph to both position and modulate activation of AURKB and other components of the chromosomal passenger complex (CPC) at centromeres to ensure proper chromatid cohesion, metaphase alignment and normal progression through the cell cycle.</text>
</comment>
<comment type="catalytic activity">
    <reaction evidence="3">
        <text>L-seryl-[protein] + ATP = O-phospho-L-seryl-[protein] + ADP + H(+)</text>
        <dbReference type="Rhea" id="RHEA:17989"/>
        <dbReference type="Rhea" id="RHEA-COMP:9863"/>
        <dbReference type="Rhea" id="RHEA-COMP:11604"/>
        <dbReference type="ChEBI" id="CHEBI:15378"/>
        <dbReference type="ChEBI" id="CHEBI:29999"/>
        <dbReference type="ChEBI" id="CHEBI:30616"/>
        <dbReference type="ChEBI" id="CHEBI:83421"/>
        <dbReference type="ChEBI" id="CHEBI:456216"/>
        <dbReference type="EC" id="2.7.11.1"/>
    </reaction>
</comment>
<comment type="catalytic activity">
    <reaction evidence="3">
        <text>L-threonyl-[protein] + ATP = O-phospho-L-threonyl-[protein] + ADP + H(+)</text>
        <dbReference type="Rhea" id="RHEA:46608"/>
        <dbReference type="Rhea" id="RHEA-COMP:11060"/>
        <dbReference type="Rhea" id="RHEA-COMP:11605"/>
        <dbReference type="ChEBI" id="CHEBI:15378"/>
        <dbReference type="ChEBI" id="CHEBI:30013"/>
        <dbReference type="ChEBI" id="CHEBI:30616"/>
        <dbReference type="ChEBI" id="CHEBI:61977"/>
        <dbReference type="ChEBI" id="CHEBI:456216"/>
        <dbReference type="EC" id="2.7.11.1"/>
    </reaction>
</comment>
<comment type="cofactor">
    <cofactor evidence="3">
        <name>Mg(2+)</name>
        <dbReference type="ChEBI" id="CHEBI:18420"/>
    </cofactor>
</comment>
<comment type="activity regulation">
    <text evidence="3">Constitutive activity that does not require phosphorylation. Specifically inhibited by 3-(1H-indazol-5-yl)-N-propylimidazo[1,2-b]pyridazin-6-amine (CHR-6494).</text>
</comment>
<comment type="subcellular location">
    <subcellularLocation>
        <location evidence="6">Nucleus</location>
    </subcellularLocation>
    <subcellularLocation>
        <location evidence="3">Chromosome</location>
    </subcellularLocation>
    <subcellularLocation>
        <location evidence="3">Cytoplasm</location>
        <location evidence="3">Cytoskeleton</location>
        <location evidence="3">Spindle</location>
    </subcellularLocation>
    <text evidence="3">Nuclear during interphase and associates with the chromosomes and spindle apparatus during mitosis.</text>
</comment>
<comment type="tissue specificity">
    <text evidence="6 7 8">Expressed in germ cells within the testis of adults and of embryos from day 24 onwards. Also present in adult thymus and weakly expressed in spleen, lung and whole embryo.</text>
</comment>
<comment type="PTM">
    <text evidence="1 3">Autophosphorylated on both serine and threonine residues (By similarity). Strongly phosphorylated during mitosis but this does not appear to significantly affect its intrinsic kinase activity. Phosphorylation by AURKB is required for full activity toward histone H3 at 'Ser-3' in mitosis (By similarity).</text>
</comment>
<comment type="similarity">
    <text evidence="4">Belongs to the protein kinase superfamily. Ser/Thr protein kinase family. Haspin subfamily.</text>
</comment>
<accession>Q9Z0R0</accession>
<accession>Q99MU9</accession>
<accession>Q9JJJ4</accession>
<keyword id="KW-0067">ATP-binding</keyword>
<keyword id="KW-0131">Cell cycle</keyword>
<keyword id="KW-0156">Chromatin regulator</keyword>
<keyword id="KW-0158">Chromosome</keyword>
<keyword id="KW-0963">Cytoplasm</keyword>
<keyword id="KW-0206">Cytoskeleton</keyword>
<keyword id="KW-0418">Kinase</keyword>
<keyword id="KW-0460">Magnesium</keyword>
<keyword id="KW-0547">Nucleotide-binding</keyword>
<keyword id="KW-0539">Nucleus</keyword>
<keyword id="KW-0597">Phosphoprotein</keyword>
<keyword id="KW-1185">Reference proteome</keyword>
<keyword id="KW-0723">Serine/threonine-protein kinase</keyword>
<keyword id="KW-0808">Transferase</keyword>
<dbReference type="EC" id="2.7.11.1"/>
<dbReference type="EMBL" id="D87326">
    <property type="protein sequence ID" value="BAA75494.1"/>
    <property type="molecule type" value="mRNA"/>
</dbReference>
<dbReference type="EMBL" id="AB036930">
    <property type="protein sequence ID" value="BAB00640.1"/>
    <property type="molecule type" value="Genomic_DNA"/>
</dbReference>
<dbReference type="EMBL" id="AF289866">
    <property type="protein sequence ID" value="AAK30301.1"/>
    <property type="molecule type" value="Genomic_DNA"/>
</dbReference>
<dbReference type="EMBL" id="AL670399">
    <property type="protein sequence ID" value="CAI24789.1"/>
    <property type="molecule type" value="Genomic_DNA"/>
</dbReference>
<dbReference type="CCDS" id="CCDS24997.1"/>
<dbReference type="RefSeq" id="NP_034483.1">
    <property type="nucleotide sequence ID" value="NM_010353.2"/>
</dbReference>
<dbReference type="SMR" id="Q9Z0R0"/>
<dbReference type="BioGRID" id="200084">
    <property type="interactions" value="1"/>
</dbReference>
<dbReference type="FunCoup" id="Q9Z0R0">
    <property type="interactions" value="666"/>
</dbReference>
<dbReference type="IntAct" id="Q9Z0R0">
    <property type="interactions" value="1"/>
</dbReference>
<dbReference type="MINT" id="Q9Z0R0"/>
<dbReference type="STRING" id="10090.ENSMUSP00000055806"/>
<dbReference type="iPTMnet" id="Q9Z0R0"/>
<dbReference type="PhosphoSitePlus" id="Q9Z0R0"/>
<dbReference type="jPOST" id="Q9Z0R0"/>
<dbReference type="PaxDb" id="10090-ENSMUSP00000055806"/>
<dbReference type="ProteomicsDB" id="269811"/>
<dbReference type="Pumba" id="Q9Z0R0"/>
<dbReference type="DNASU" id="14841"/>
<dbReference type="GeneID" id="14841"/>
<dbReference type="KEGG" id="mmu:14841"/>
<dbReference type="UCSC" id="uc007jzz.2">
    <property type="organism name" value="mouse"/>
</dbReference>
<dbReference type="AGR" id="MGI:1194498"/>
<dbReference type="CTD" id="83903"/>
<dbReference type="MGI" id="MGI:1194498">
    <property type="gene designation" value="Haspin"/>
</dbReference>
<dbReference type="eggNOG" id="KOG2464">
    <property type="taxonomic scope" value="Eukaryota"/>
</dbReference>
<dbReference type="InParanoid" id="Q9Z0R0"/>
<dbReference type="OrthoDB" id="21018at2759"/>
<dbReference type="PhylomeDB" id="Q9Z0R0"/>
<dbReference type="TreeFam" id="TF313895"/>
<dbReference type="BioGRID-ORCS" id="14841">
    <property type="hits" value="2 hits in 85 CRISPR screens"/>
</dbReference>
<dbReference type="ChiTaRS" id="Haspin">
    <property type="organism name" value="mouse"/>
</dbReference>
<dbReference type="PRO" id="PR:Q9Z0R0"/>
<dbReference type="Proteomes" id="UP000000589">
    <property type="component" value="Unplaced"/>
</dbReference>
<dbReference type="RNAct" id="Q9Z0R0">
    <property type="molecule type" value="protein"/>
</dbReference>
<dbReference type="GO" id="GO:0005813">
    <property type="term" value="C:centrosome"/>
    <property type="evidence" value="ECO:0000250"/>
    <property type="project" value="UniProtKB"/>
</dbReference>
<dbReference type="GO" id="GO:0005694">
    <property type="term" value="C:chromosome"/>
    <property type="evidence" value="ECO:0007669"/>
    <property type="project" value="UniProtKB-SubCell"/>
</dbReference>
<dbReference type="GO" id="GO:0005737">
    <property type="term" value="C:cytoplasm"/>
    <property type="evidence" value="ECO:0007669"/>
    <property type="project" value="UniProtKB-KW"/>
</dbReference>
<dbReference type="GO" id="GO:0001673">
    <property type="term" value="C:male germ cell nucleus"/>
    <property type="evidence" value="ECO:0000314"/>
    <property type="project" value="MGI"/>
</dbReference>
<dbReference type="GO" id="GO:0005634">
    <property type="term" value="C:nucleus"/>
    <property type="evidence" value="ECO:0000314"/>
    <property type="project" value="UniProtKB"/>
</dbReference>
<dbReference type="GO" id="GO:0005819">
    <property type="term" value="C:spindle"/>
    <property type="evidence" value="ECO:0000250"/>
    <property type="project" value="UniProtKB"/>
</dbReference>
<dbReference type="GO" id="GO:0005524">
    <property type="term" value="F:ATP binding"/>
    <property type="evidence" value="ECO:0000314"/>
    <property type="project" value="UniProtKB"/>
</dbReference>
<dbReference type="GO" id="GO:0003677">
    <property type="term" value="F:DNA binding"/>
    <property type="evidence" value="ECO:0000314"/>
    <property type="project" value="MGI"/>
</dbReference>
<dbReference type="GO" id="GO:0072354">
    <property type="term" value="F:histone H3T3 kinase activity"/>
    <property type="evidence" value="ECO:0000250"/>
    <property type="project" value="UniProtKB"/>
</dbReference>
<dbReference type="GO" id="GO:0035173">
    <property type="term" value="F:histone kinase activity"/>
    <property type="evidence" value="ECO:0000315"/>
    <property type="project" value="MGI"/>
</dbReference>
<dbReference type="GO" id="GO:0106310">
    <property type="term" value="F:protein serine kinase activity"/>
    <property type="evidence" value="ECO:0007669"/>
    <property type="project" value="RHEA"/>
</dbReference>
<dbReference type="GO" id="GO:0004674">
    <property type="term" value="F:protein serine/threonine kinase activity"/>
    <property type="evidence" value="ECO:0000314"/>
    <property type="project" value="UniProtKB"/>
</dbReference>
<dbReference type="GO" id="GO:0070192">
    <property type="term" value="P:chromosome organization involved in meiotic cell cycle"/>
    <property type="evidence" value="ECO:0000315"/>
    <property type="project" value="MGI"/>
</dbReference>
<dbReference type="GO" id="GO:0010467">
    <property type="term" value="P:gene expression"/>
    <property type="evidence" value="ECO:0000315"/>
    <property type="project" value="MGI"/>
</dbReference>
<dbReference type="GO" id="GO:0045143">
    <property type="term" value="P:homologous chromosome segregation"/>
    <property type="evidence" value="ECO:0000315"/>
    <property type="project" value="MGI"/>
</dbReference>
<dbReference type="GO" id="GO:0035556">
    <property type="term" value="P:intracellular signal transduction"/>
    <property type="evidence" value="ECO:0000314"/>
    <property type="project" value="UniProtKB"/>
</dbReference>
<dbReference type="GO" id="GO:0007064">
    <property type="term" value="P:mitotic sister chromatid cohesion"/>
    <property type="evidence" value="ECO:0000250"/>
    <property type="project" value="UniProtKB"/>
</dbReference>
<dbReference type="GO" id="GO:0007094">
    <property type="term" value="P:mitotic spindle assembly checkpoint signaling"/>
    <property type="evidence" value="ECO:0000250"/>
    <property type="project" value="UniProtKB"/>
</dbReference>
<dbReference type="GO" id="GO:2000134">
    <property type="term" value="P:negative regulation of G1/S transition of mitotic cell cycle"/>
    <property type="evidence" value="ECO:0000314"/>
    <property type="project" value="MGI"/>
</dbReference>
<dbReference type="GO" id="GO:0071459">
    <property type="term" value="P:protein localization to chromosome, centromeric region"/>
    <property type="evidence" value="ECO:0000250"/>
    <property type="project" value="UniProtKB"/>
</dbReference>
<dbReference type="GO" id="GO:0006468">
    <property type="term" value="P:protein phosphorylation"/>
    <property type="evidence" value="ECO:0000314"/>
    <property type="project" value="UniProtKB"/>
</dbReference>
<dbReference type="FunFam" id="1.10.510.10:FF:000401">
    <property type="entry name" value="serine/threonine-protein kinase haspin"/>
    <property type="match status" value="1"/>
</dbReference>
<dbReference type="FunFam" id="3.30.200.20:FF:000409">
    <property type="entry name" value="serine/threonine-protein kinase haspin"/>
    <property type="match status" value="1"/>
</dbReference>
<dbReference type="Gene3D" id="3.30.200.20">
    <property type="entry name" value="Phosphorylase Kinase, domain 1"/>
    <property type="match status" value="1"/>
</dbReference>
<dbReference type="Gene3D" id="1.10.510.10">
    <property type="entry name" value="Transferase(Phosphotransferase) domain 1"/>
    <property type="match status" value="1"/>
</dbReference>
<dbReference type="InterPro" id="IPR024604">
    <property type="entry name" value="GSG2_C"/>
</dbReference>
<dbReference type="InterPro" id="IPR011009">
    <property type="entry name" value="Kinase-like_dom_sf"/>
</dbReference>
<dbReference type="InterPro" id="IPR000719">
    <property type="entry name" value="Prot_kinase_dom"/>
</dbReference>
<dbReference type="InterPro" id="IPR017441">
    <property type="entry name" value="Protein_kinase_ATP_BS"/>
</dbReference>
<dbReference type="PANTHER" id="PTHR24419">
    <property type="entry name" value="INTERLEUKIN-1 RECEPTOR-ASSOCIATED KINASE"/>
    <property type="match status" value="1"/>
</dbReference>
<dbReference type="PANTHER" id="PTHR24419:SF18">
    <property type="entry name" value="SERINE_THREONINE-PROTEIN KINASE HASPIN"/>
    <property type="match status" value="1"/>
</dbReference>
<dbReference type="Pfam" id="PF12330">
    <property type="entry name" value="Haspin_kinase"/>
    <property type="match status" value="1"/>
</dbReference>
<dbReference type="SMART" id="SM01331">
    <property type="entry name" value="DUF3635"/>
    <property type="match status" value="1"/>
</dbReference>
<dbReference type="SMART" id="SM00220">
    <property type="entry name" value="S_TKc"/>
    <property type="match status" value="1"/>
</dbReference>
<dbReference type="SUPFAM" id="SSF56112">
    <property type="entry name" value="Protein kinase-like (PK-like)"/>
    <property type="match status" value="1"/>
</dbReference>
<dbReference type="PROSITE" id="PS00107">
    <property type="entry name" value="PROTEIN_KINASE_ATP"/>
    <property type="match status" value="1"/>
</dbReference>
<dbReference type="PROSITE" id="PS50011">
    <property type="entry name" value="PROTEIN_KINASE_DOM"/>
    <property type="match status" value="1"/>
</dbReference>
<evidence type="ECO:0000250" key="1"/>
<evidence type="ECO:0000250" key="2">
    <source>
        <dbReference type="UniProtKB" id="P24941"/>
    </source>
</evidence>
<evidence type="ECO:0000250" key="3">
    <source>
        <dbReference type="UniProtKB" id="Q8TF76"/>
    </source>
</evidence>
<evidence type="ECO:0000255" key="4">
    <source>
        <dbReference type="PROSITE-ProRule" id="PRU00159"/>
    </source>
</evidence>
<evidence type="ECO:0000256" key="5">
    <source>
        <dbReference type="SAM" id="MobiDB-lite"/>
    </source>
</evidence>
<evidence type="ECO:0000269" key="6">
    <source>
    </source>
</evidence>
<evidence type="ECO:0000269" key="7">
    <source>
    </source>
</evidence>
<evidence type="ECO:0000269" key="8">
    <source>
    </source>
</evidence>
<evidence type="ECO:0000305" key="9"/>
<evidence type="ECO:0000312" key="10">
    <source>
        <dbReference type="EMBL" id="AAK30301.1"/>
    </source>
</evidence>
<evidence type="ECO:0000312" key="11">
    <source>
        <dbReference type="EMBL" id="BAA75494.1"/>
    </source>
</evidence>
<evidence type="ECO:0000312" key="12">
    <source>
        <dbReference type="EMBL" id="BAB00640.1"/>
    </source>
</evidence>
<evidence type="ECO:0007744" key="13">
    <source>
    </source>
</evidence>
<sequence length="754" mass="84181">MAQAHPRSGTRLFRTYAARGVRGSQRQPGGLAEQWFQPPNLKRAFSSSLSDSNESPAVASDDPDDPDFPGSLVGQRRRRPRGSGSRNQRTLTNTPRVQRLRPRPPQKCSTPCSRLRPPPFPNCSPGCLGSDHSVCIQSRDSNELGTSASLFSSPASPGAPDPLYADSAVPGSFHLPAASLSEPSVPCPQVAATGDRYTGRALRAEASFRSSLFSLVNSGATEENKFGTDGENVKESCCERRQQMGNRLTDPDLTSPGKRKAACKKVVSQGVDQRDYEESSACKDLRVPGEISRPKRTGPLRKRKQQEATGTPPRHYHQSKKKRKASVSLWNLNTSQRDSWTKTRASFGFHKKKIITSVIEVCSSVASSSSRSLLSECSTPPIKNRAHLTVSSRCSSVYLLSPLKTLHVTDQRPSYAEKVYGECNQEGPIPFSDCLSTEKLERCEKIGEGVFGEVFQIINDQAPVALKIIAIEGLDLVNGSHQKTFEEILPEIIISKELSLLSSEAYNRTEGFIGLNSVHCVQGLYPPLLLKAWDHYNTTKRSANDRPDFFQEDQLFIILEFEFGGVDLERMKTKLSSVATAKSILHQITASLAVAEASLHFEHRDLHWGNVLLKKTNLKELRYTLNGKTSTIPTHGLQVNIIDYTLSRLERDGIVVFCDISAEEDLFTGEGDYQFEIYRLMRKENKNCWGEYHPYNNVLWLHYLTDKILNKMKFKTKCQSAAMKQIRKNLQHFHRTVLSFSSATDLLCQHSLFR</sequence>
<protein>
    <recommendedName>
        <fullName>Serine/threonine-protein kinase haspin</fullName>
        <ecNumber>2.7.11.1</ecNumber>
    </recommendedName>
    <alternativeName>
        <fullName>Germ cell-specific gene 2 protein</fullName>
    </alternativeName>
    <alternativeName>
        <fullName>Haploid germ cell-specific nuclear protein kinase</fullName>
    </alternativeName>
</protein>
<organism evidence="11">
    <name type="scientific">Mus musculus</name>
    <name type="common">Mouse</name>
    <dbReference type="NCBI Taxonomy" id="10090"/>
    <lineage>
        <taxon>Eukaryota</taxon>
        <taxon>Metazoa</taxon>
        <taxon>Chordata</taxon>
        <taxon>Craniata</taxon>
        <taxon>Vertebrata</taxon>
        <taxon>Euteleostomi</taxon>
        <taxon>Mammalia</taxon>
        <taxon>Eutheria</taxon>
        <taxon>Euarchontoglires</taxon>
        <taxon>Glires</taxon>
        <taxon>Rodentia</taxon>
        <taxon>Myomorpha</taxon>
        <taxon>Muroidea</taxon>
        <taxon>Muridae</taxon>
        <taxon>Murinae</taxon>
        <taxon>Mus</taxon>
        <taxon>Mus</taxon>
    </lineage>
</organism>